<keyword id="KW-0067">ATP-binding</keyword>
<keyword id="KW-0963">Cytoplasm</keyword>
<keyword id="KW-0315">Glutamine amidotransferase</keyword>
<keyword id="KW-0436">Ligase</keyword>
<keyword id="KW-0460">Magnesium</keyword>
<keyword id="KW-0479">Metal-binding</keyword>
<keyword id="KW-0547">Nucleotide-binding</keyword>
<keyword id="KW-0658">Purine biosynthesis</keyword>
<keyword id="KW-1185">Reference proteome</keyword>
<accession>Q8XYN6</accession>
<reference key="1">
    <citation type="journal article" date="2002" name="Nature">
        <title>Genome sequence of the plant pathogen Ralstonia solanacearum.</title>
        <authorList>
            <person name="Salanoubat M."/>
            <person name="Genin S."/>
            <person name="Artiguenave F."/>
            <person name="Gouzy J."/>
            <person name="Mangenot S."/>
            <person name="Arlat M."/>
            <person name="Billault A."/>
            <person name="Brottier P."/>
            <person name="Camus J.-C."/>
            <person name="Cattolico L."/>
            <person name="Chandler M."/>
            <person name="Choisne N."/>
            <person name="Claudel-Renard C."/>
            <person name="Cunnac S."/>
            <person name="Demange N."/>
            <person name="Gaspin C."/>
            <person name="Lavie M."/>
            <person name="Moisan A."/>
            <person name="Robert C."/>
            <person name="Saurin W."/>
            <person name="Schiex T."/>
            <person name="Siguier P."/>
            <person name="Thebault P."/>
            <person name="Whalen M."/>
            <person name="Wincker P."/>
            <person name="Levy M."/>
            <person name="Weissenbach J."/>
            <person name="Boucher C.A."/>
        </authorList>
    </citation>
    <scope>NUCLEOTIDE SEQUENCE [LARGE SCALE GENOMIC DNA]</scope>
    <source>
        <strain>ATCC BAA-1114 / GMI1000</strain>
    </source>
</reference>
<comment type="function">
    <text evidence="1">Phosphoribosylformylglycinamidine synthase involved in the purines biosynthetic pathway. Catalyzes the ATP-dependent conversion of formylglycinamide ribonucleotide (FGAR) and glutamine to yield formylglycinamidine ribonucleotide (FGAM) and glutamate.</text>
</comment>
<comment type="catalytic activity">
    <reaction evidence="1">
        <text>N(2)-formyl-N(1)-(5-phospho-beta-D-ribosyl)glycinamide + L-glutamine + ATP + H2O = 2-formamido-N(1)-(5-O-phospho-beta-D-ribosyl)acetamidine + L-glutamate + ADP + phosphate + H(+)</text>
        <dbReference type="Rhea" id="RHEA:17129"/>
        <dbReference type="ChEBI" id="CHEBI:15377"/>
        <dbReference type="ChEBI" id="CHEBI:15378"/>
        <dbReference type="ChEBI" id="CHEBI:29985"/>
        <dbReference type="ChEBI" id="CHEBI:30616"/>
        <dbReference type="ChEBI" id="CHEBI:43474"/>
        <dbReference type="ChEBI" id="CHEBI:58359"/>
        <dbReference type="ChEBI" id="CHEBI:147286"/>
        <dbReference type="ChEBI" id="CHEBI:147287"/>
        <dbReference type="ChEBI" id="CHEBI:456216"/>
        <dbReference type="EC" id="6.3.5.3"/>
    </reaction>
</comment>
<comment type="pathway">
    <text evidence="1">Purine metabolism; IMP biosynthesis via de novo pathway; 5-amino-1-(5-phospho-D-ribosyl)imidazole from N(2)-formyl-N(1)-(5-phospho-D-ribosyl)glycinamide: step 1/2.</text>
</comment>
<comment type="subunit">
    <text evidence="1">Monomer.</text>
</comment>
<comment type="subcellular location">
    <subcellularLocation>
        <location evidence="1">Cytoplasm</location>
    </subcellularLocation>
</comment>
<comment type="similarity">
    <text evidence="1">In the N-terminal section; belongs to the FGAMS family.</text>
</comment>
<organism>
    <name type="scientific">Ralstonia nicotianae (strain ATCC BAA-1114 / GMI1000)</name>
    <name type="common">Ralstonia solanacearum</name>
    <dbReference type="NCBI Taxonomy" id="267608"/>
    <lineage>
        <taxon>Bacteria</taxon>
        <taxon>Pseudomonadati</taxon>
        <taxon>Pseudomonadota</taxon>
        <taxon>Betaproteobacteria</taxon>
        <taxon>Burkholderiales</taxon>
        <taxon>Burkholderiaceae</taxon>
        <taxon>Ralstonia</taxon>
        <taxon>Ralstonia solanacearum species complex</taxon>
    </lineage>
</organism>
<proteinExistence type="inferred from homology"/>
<sequence length="1369" mass="146481">MAHFSCFPGALALSAFRQQRLLSTLKRIDPEIDAVSAQYLHFVAADAPLSADDAARVQALLTYGSPASAETEGDRFVVIPRFGTISPWASKATEIARHCALPQIHRIERGVEFTVTCKKGLLRGLTGGRKQLDEATRAAVAAHLHDRMTEIVVATREAGYGLFDVLPAKALRFVDLGSGDAAAGRGALEAANTEMGLALSDDEIDYLVDAYRKLGRNPTDVELMMFAQANSEHCRHKIFNADWTIDGETQDKSLFAMIRNTHQLAPQGTVVAYSDNAAVMEGGMAERWFPHAGTDGETGVPQYGRREALTHTLMKVETHNHPTAISPFPGASTGAGGEIRDEGATGRGAKPKAGLTGFTVSNLLLPEAVQSWENARDTAQPAAQRNPGDTAPGPVGKPDRIASPLQIMIEGPIGGAAFNNEFGRPNLGGYFRVYEQNVGGTVRGYHKPIMIAGGIGNIDAGHTHKHGLPAGTLLVQLGGPGMRIGMGGGAASSMATGTNTADLDFDSVQRGNPEMQRRAQEVINACWALGEDNPILSIHDVGAGGISNAFPELVDGADRGARFDLRQVHLEESGLSPAEIWCNESQERYTLAIAPGDFPRFQAMCERERAPFSVVGFATEEQQLQVVDGDAPADAVEHFPVNMPMDVLLGKPPRMHRDVRRVAQALPEVDVTGLDLETVARDVLRHPTVASKSFLITIGDRTVGGLNTRDQMVGPWQVPVADVAVTTLDYKGYAGEAMTMGERTPLAVIDAPASGRMAIGEAITNIAAAPIASLAQLKLSANWMAACGVDGEDARLYDTVKAVGMELCPALGISIPVGKDSLSMRTKWDDAGEAKEVVAPVSLIVSAFAPVTDVRKTLTPQLKPVASAGEAADTTLIVIDLGHGKHRLGGSILAQVTQQIGNSVPDVGDAEDLKRFFAAIQQLNAAGMLLAYHDRSDGGLWATVCEMAFAGHCGVSINVDMLTLDGAHASDYGDAKNWAQQVSGRRADMTLRALFAEELGAVIQVPAAQRDAVFAVLREHGLAACSHVIGAPNASGQIEIWRDAKKVFSAPRIELQRAWTDVSWRIASLRDNPECTQSEYDRLLDAEDPGISPNLTFDLAEDVAAPFIATGARPRMAILREQGVNSQVEMAYAMDKAGFDAYDVHMSDLLAGRTRLADFKGFVACGGFSYGDVLGAGEGWAKTILFNGMLAEQFAAFFNRADSIALGVCNGCQMMANLAPIIPGAGAWPKFTRNQSEQYEGRLVTVQVEASPSIFYAGMEGSRIPIVVAHGEGYADFSQQGDIGKVAVGLRYVDNRGEVTQTYPLNPNGSPQGIASVTTHDGRFTVLMPHPERVFRAVQMSWHPKDWAAAGDGSSPWMRMFRNARKQMG</sequence>
<name>PUR4_RALN1</name>
<protein>
    <recommendedName>
        <fullName evidence="1">Phosphoribosylformylglycinamidine synthase</fullName>
        <shortName evidence="1">FGAM synthase</shortName>
        <shortName evidence="1">FGAMS</shortName>
        <ecNumber evidence="1">6.3.5.3</ecNumber>
    </recommendedName>
    <alternativeName>
        <fullName evidence="1">Formylglycinamide ribonucleotide amidotransferase</fullName>
        <shortName evidence="1">FGAR amidotransferase</shortName>
        <shortName evidence="1">FGAR-AT</shortName>
    </alternativeName>
</protein>
<gene>
    <name evidence="1" type="primary">purL</name>
    <name type="ordered locus">RSc1722</name>
    <name type="ORF">RS02912</name>
</gene>
<dbReference type="EC" id="6.3.5.3" evidence="1"/>
<dbReference type="EMBL" id="AL646052">
    <property type="protein sequence ID" value="CAD15424.1"/>
    <property type="molecule type" value="Genomic_DNA"/>
</dbReference>
<dbReference type="RefSeq" id="WP_011001661.1">
    <property type="nucleotide sequence ID" value="NC_003295.1"/>
</dbReference>
<dbReference type="SMR" id="Q8XYN6"/>
<dbReference type="STRING" id="267608.RSc1722"/>
<dbReference type="EnsemblBacteria" id="CAD15424">
    <property type="protein sequence ID" value="CAD15424"/>
    <property type="gene ID" value="RSc1722"/>
</dbReference>
<dbReference type="KEGG" id="rso:RSc1722"/>
<dbReference type="PATRIC" id="fig|267608.8.peg.1767"/>
<dbReference type="eggNOG" id="COG0046">
    <property type="taxonomic scope" value="Bacteria"/>
</dbReference>
<dbReference type="eggNOG" id="COG0047">
    <property type="taxonomic scope" value="Bacteria"/>
</dbReference>
<dbReference type="HOGENOM" id="CLU_001031_0_2_4"/>
<dbReference type="UniPathway" id="UPA00074">
    <property type="reaction ID" value="UER00128"/>
</dbReference>
<dbReference type="Proteomes" id="UP000001436">
    <property type="component" value="Chromosome"/>
</dbReference>
<dbReference type="GO" id="GO:0005737">
    <property type="term" value="C:cytoplasm"/>
    <property type="evidence" value="ECO:0007669"/>
    <property type="project" value="UniProtKB-SubCell"/>
</dbReference>
<dbReference type="GO" id="GO:0005524">
    <property type="term" value="F:ATP binding"/>
    <property type="evidence" value="ECO:0007669"/>
    <property type="project" value="UniProtKB-UniRule"/>
</dbReference>
<dbReference type="GO" id="GO:0046872">
    <property type="term" value="F:metal ion binding"/>
    <property type="evidence" value="ECO:0007669"/>
    <property type="project" value="UniProtKB-KW"/>
</dbReference>
<dbReference type="GO" id="GO:0004642">
    <property type="term" value="F:phosphoribosylformylglycinamidine synthase activity"/>
    <property type="evidence" value="ECO:0007669"/>
    <property type="project" value="UniProtKB-UniRule"/>
</dbReference>
<dbReference type="GO" id="GO:0006189">
    <property type="term" value="P:'de novo' IMP biosynthetic process"/>
    <property type="evidence" value="ECO:0007669"/>
    <property type="project" value="UniProtKB-UniRule"/>
</dbReference>
<dbReference type="CDD" id="cd01740">
    <property type="entry name" value="GATase1_FGAR_AT"/>
    <property type="match status" value="1"/>
</dbReference>
<dbReference type="CDD" id="cd02203">
    <property type="entry name" value="PurL_repeat1"/>
    <property type="match status" value="1"/>
</dbReference>
<dbReference type="CDD" id="cd02204">
    <property type="entry name" value="PurL_repeat2"/>
    <property type="match status" value="1"/>
</dbReference>
<dbReference type="FunFam" id="1.10.8.750:FF:000002">
    <property type="entry name" value="Phosphoribosylformylglycinamidine synthase"/>
    <property type="match status" value="1"/>
</dbReference>
<dbReference type="FunFam" id="3.30.1330.10:FF:000005">
    <property type="entry name" value="Phosphoribosylformylglycinamidine synthase"/>
    <property type="match status" value="1"/>
</dbReference>
<dbReference type="FunFam" id="3.40.50.880:FF:000008">
    <property type="entry name" value="Phosphoribosylformylglycinamidine synthase"/>
    <property type="match status" value="1"/>
</dbReference>
<dbReference type="FunFam" id="3.90.650.10:FF:000024">
    <property type="entry name" value="Phosphoribosylformylglycinamidine synthase"/>
    <property type="match status" value="1"/>
</dbReference>
<dbReference type="Gene3D" id="3.40.50.880">
    <property type="match status" value="1"/>
</dbReference>
<dbReference type="Gene3D" id="1.10.8.750">
    <property type="entry name" value="Phosphoribosylformylglycinamidine synthase, linker domain"/>
    <property type="match status" value="1"/>
</dbReference>
<dbReference type="Gene3D" id="3.90.650.10">
    <property type="entry name" value="PurM-like C-terminal domain"/>
    <property type="match status" value="2"/>
</dbReference>
<dbReference type="Gene3D" id="3.30.1330.10">
    <property type="entry name" value="PurM-like, N-terminal domain"/>
    <property type="match status" value="2"/>
</dbReference>
<dbReference type="HAMAP" id="MF_00419">
    <property type="entry name" value="PurL_1"/>
    <property type="match status" value="1"/>
</dbReference>
<dbReference type="InterPro" id="IPR029062">
    <property type="entry name" value="Class_I_gatase-like"/>
</dbReference>
<dbReference type="InterPro" id="IPR040707">
    <property type="entry name" value="FGAR-AT_N"/>
</dbReference>
<dbReference type="InterPro" id="IPR055181">
    <property type="entry name" value="FGAR-AT_PurM_N-like"/>
</dbReference>
<dbReference type="InterPro" id="IPR010073">
    <property type="entry name" value="PurL_large"/>
</dbReference>
<dbReference type="InterPro" id="IPR041609">
    <property type="entry name" value="PurL_linker"/>
</dbReference>
<dbReference type="InterPro" id="IPR010918">
    <property type="entry name" value="PurM-like_C_dom"/>
</dbReference>
<dbReference type="InterPro" id="IPR036676">
    <property type="entry name" value="PurM-like_C_sf"/>
</dbReference>
<dbReference type="InterPro" id="IPR036921">
    <property type="entry name" value="PurM-like_N_sf"/>
</dbReference>
<dbReference type="InterPro" id="IPR036604">
    <property type="entry name" value="PurS-like_sf"/>
</dbReference>
<dbReference type="NCBIfam" id="TIGR01735">
    <property type="entry name" value="FGAM_synt"/>
    <property type="match status" value="1"/>
</dbReference>
<dbReference type="NCBIfam" id="NF003672">
    <property type="entry name" value="PRK05297.1"/>
    <property type="match status" value="1"/>
</dbReference>
<dbReference type="PANTHER" id="PTHR10099">
    <property type="entry name" value="PHOSPHORIBOSYLFORMYLGLYCINAMIDINE SYNTHASE"/>
    <property type="match status" value="1"/>
</dbReference>
<dbReference type="PANTHER" id="PTHR10099:SF1">
    <property type="entry name" value="PHOSPHORIBOSYLFORMYLGLYCINAMIDINE SYNTHASE"/>
    <property type="match status" value="1"/>
</dbReference>
<dbReference type="Pfam" id="PF02769">
    <property type="entry name" value="AIRS_C"/>
    <property type="match status" value="2"/>
</dbReference>
<dbReference type="Pfam" id="PF18072">
    <property type="entry name" value="FGAR-AT_linker"/>
    <property type="match status" value="1"/>
</dbReference>
<dbReference type="Pfam" id="PF18076">
    <property type="entry name" value="FGAR-AT_N"/>
    <property type="match status" value="1"/>
</dbReference>
<dbReference type="Pfam" id="PF22689">
    <property type="entry name" value="FGAR-AT_PurM_N-like"/>
    <property type="match status" value="1"/>
</dbReference>
<dbReference type="Pfam" id="PF13507">
    <property type="entry name" value="GATase_5"/>
    <property type="match status" value="1"/>
</dbReference>
<dbReference type="SMART" id="SM01211">
    <property type="entry name" value="GATase_5"/>
    <property type="match status" value="1"/>
</dbReference>
<dbReference type="SUPFAM" id="SSF52317">
    <property type="entry name" value="Class I glutamine amidotransferase-like"/>
    <property type="match status" value="1"/>
</dbReference>
<dbReference type="SUPFAM" id="SSF109736">
    <property type="entry name" value="FGAM synthase PurL, linker domain"/>
    <property type="match status" value="1"/>
</dbReference>
<dbReference type="SUPFAM" id="SSF56042">
    <property type="entry name" value="PurM C-terminal domain-like"/>
    <property type="match status" value="2"/>
</dbReference>
<dbReference type="SUPFAM" id="SSF55326">
    <property type="entry name" value="PurM N-terminal domain-like"/>
    <property type="match status" value="2"/>
</dbReference>
<dbReference type="SUPFAM" id="SSF82697">
    <property type="entry name" value="PurS-like"/>
    <property type="match status" value="1"/>
</dbReference>
<dbReference type="PROSITE" id="PS51273">
    <property type="entry name" value="GATASE_TYPE_1"/>
    <property type="match status" value="1"/>
</dbReference>
<feature type="chain" id="PRO_0000100416" description="Phosphoribosylformylglycinamidine synthase">
    <location>
        <begin position="1"/>
        <end position="1369"/>
    </location>
</feature>
<feature type="domain" description="Glutamine amidotransferase type-1" evidence="1">
    <location>
        <begin position="1116"/>
        <end position="1369"/>
    </location>
</feature>
<feature type="region of interest" description="Disordered" evidence="2">
    <location>
        <begin position="321"/>
        <end position="352"/>
    </location>
</feature>
<feature type="region of interest" description="Disordered" evidence="2">
    <location>
        <begin position="373"/>
        <end position="400"/>
    </location>
</feature>
<feature type="active site" description="Nucleophile" evidence="1">
    <location>
        <position position="1209"/>
    </location>
</feature>
<feature type="active site" evidence="1">
    <location>
        <position position="1330"/>
    </location>
</feature>
<feature type="active site" evidence="1">
    <location>
        <position position="1332"/>
    </location>
</feature>
<feature type="binding site" evidence="1">
    <location>
        <begin position="330"/>
        <end position="341"/>
    </location>
    <ligand>
        <name>ATP</name>
        <dbReference type="ChEBI" id="CHEBI:30616"/>
    </ligand>
</feature>
<feature type="binding site" evidence="1">
    <location>
        <position position="721"/>
    </location>
    <ligand>
        <name>ATP</name>
        <dbReference type="ChEBI" id="CHEBI:30616"/>
    </ligand>
</feature>
<feature type="binding site" evidence="1">
    <location>
        <position position="722"/>
    </location>
    <ligand>
        <name>Mg(2+)</name>
        <dbReference type="ChEBI" id="CHEBI:18420"/>
    </ligand>
</feature>
<feature type="binding site" evidence="1">
    <location>
        <position position="761"/>
    </location>
    <ligand>
        <name>Mg(2+)</name>
        <dbReference type="ChEBI" id="CHEBI:18420"/>
    </ligand>
</feature>
<feature type="binding site" evidence="1">
    <location>
        <position position="765"/>
    </location>
    <ligand>
        <name>Mg(2+)</name>
        <dbReference type="ChEBI" id="CHEBI:18420"/>
    </ligand>
</feature>
<feature type="binding site" evidence="1">
    <location>
        <position position="934"/>
    </location>
    <ligand>
        <name>Mg(2+)</name>
        <dbReference type="ChEBI" id="CHEBI:18420"/>
    </ligand>
</feature>
<feature type="binding site" evidence="1">
    <location>
        <position position="936"/>
    </location>
    <ligand>
        <name>ATP</name>
        <dbReference type="ChEBI" id="CHEBI:30616"/>
    </ligand>
</feature>
<evidence type="ECO:0000255" key="1">
    <source>
        <dbReference type="HAMAP-Rule" id="MF_00419"/>
    </source>
</evidence>
<evidence type="ECO:0000256" key="2">
    <source>
        <dbReference type="SAM" id="MobiDB-lite"/>
    </source>
</evidence>